<organismHost>
    <name type="scientific">Ailuropoda melanoleuca</name>
    <name type="common">Giant panda</name>
    <dbReference type="NCBI Taxonomy" id="9646"/>
</organismHost>
<organismHost>
    <name type="scientific">Ailurus fulgens</name>
    <name type="common">Himalayan red panda</name>
    <dbReference type="NCBI Taxonomy" id="9649"/>
</organismHost>
<organismHost>
    <name type="scientific">Canis lupus familiaris</name>
    <name type="common">Dog</name>
    <name type="synonym">Canis familiaris</name>
    <dbReference type="NCBI Taxonomy" id="9615"/>
</organismHost>
<organismHost>
    <name type="scientific">Mustela</name>
    <dbReference type="NCBI Taxonomy" id="9665"/>
</organismHost>
<organismHost>
    <name type="scientific">Panthera leo</name>
    <name type="common">Lion</name>
    <dbReference type="NCBI Taxonomy" id="9689"/>
</organismHost>
<organismHost>
    <name type="scientific">Procyon lotor</name>
    <name type="common">Raccoon</name>
    <dbReference type="NCBI Taxonomy" id="9654"/>
</organismHost>
<organismHost>
    <name type="scientific">Zalophus californianus</name>
    <name type="common">California sealion</name>
    <dbReference type="NCBI Taxonomy" id="9704"/>
</organismHost>
<keyword id="KW-0002">3D-structure</keyword>
<keyword id="KW-0325">Glycoprotein</keyword>
<keyword id="KW-0348">Hemagglutinin</keyword>
<keyword id="KW-1032">Host cell membrane</keyword>
<keyword id="KW-1043">Host membrane</keyword>
<keyword id="KW-0945">Host-virus interaction</keyword>
<keyword id="KW-0472">Membrane</keyword>
<keyword id="KW-0735">Signal-anchor</keyword>
<keyword id="KW-0812">Transmembrane</keyword>
<keyword id="KW-1133">Transmembrane helix</keyword>
<keyword id="KW-1161">Viral attachment to host cell</keyword>
<keyword id="KW-0261">Viral envelope protein</keyword>
<keyword id="KW-0946">Virion</keyword>
<keyword id="KW-1160">Virus entry into host cell</keyword>
<organism>
    <name type="scientific">Canine distemper virus (strain Onderstepoort)</name>
    <name type="common">CDV</name>
    <dbReference type="NCBI Taxonomy" id="11233"/>
    <lineage>
        <taxon>Viruses</taxon>
        <taxon>Riboviria</taxon>
        <taxon>Orthornavirae</taxon>
        <taxon>Negarnaviricota</taxon>
        <taxon>Haploviricotina</taxon>
        <taxon>Monjiviricetes</taxon>
        <taxon>Mononegavirales</taxon>
        <taxon>Paramyxoviridae</taxon>
        <taxon>Orthoparamyxovirinae</taxon>
        <taxon>Morbillivirus</taxon>
        <taxon>Morbillivirus canis</taxon>
    </lineage>
</organism>
<protein>
    <recommendedName>
        <fullName>Hemagglutinin glycoprotein</fullName>
    </recommendedName>
</protein>
<accession>P24306</accession>
<evidence type="ECO:0000250" key="1"/>
<evidence type="ECO:0000255" key="2"/>
<evidence type="ECO:0000269" key="3">
    <source>
    </source>
</evidence>
<evidence type="ECO:0000305" key="4"/>
<comment type="function">
    <text>Attaches the virus to cell receptors and thereby initiating infection. Binding of H protein to the receptor induces a conformational change that allows the F protein to trigger virion/cell membranes fusion. The cellular receptor might be SLAM, and may explain the lymphotropism of the virus.</text>
</comment>
<comment type="subunit">
    <text>Binds canine SLAMF1 at the cell surface.</text>
</comment>
<comment type="subcellular location">
    <subcellularLocation>
        <location evidence="4">Virion membrane</location>
        <topology evidence="4">Single-pass type II membrane protein</topology>
    </subcellularLocation>
    <subcellularLocation>
        <location evidence="1">Host cell membrane</location>
        <topology evidence="1">Single-pass type II membrane protein</topology>
    </subcellularLocation>
</comment>
<comment type="similarity">
    <text evidence="4">Belongs to the paramyxoviruses hemagglutinin-neuraminidase family. Non-sialidase subfamily.</text>
</comment>
<comment type="caution">
    <text evidence="4">Morbiliviruses hemagglutinins have no neuraminidase activity.</text>
</comment>
<reference key="1">
    <citation type="journal article" date="1991" name="J. Gen. Virol.">
        <title>The nucleotide sequence of the gene encoding the attachment protein H of canine distemper virus.</title>
        <authorList>
            <person name="Curran M.D."/>
            <person name="Clarke D.K."/>
            <person name="Rima B.K."/>
        </authorList>
    </citation>
    <scope>NUCLEOTIDE SEQUENCE [GENOMIC RNA]</scope>
</reference>
<reference key="2">
    <citation type="journal article" date="2001" name="J. Virol.">
        <title>Morbilliviruses use signaling lymphocyte activation molecules (CD150) as cellular receptors.</title>
        <authorList>
            <person name="Tatsuo H."/>
            <person name="Ono N."/>
            <person name="Yanagi Y."/>
        </authorList>
    </citation>
    <scope>INTERACTION WITH CANINE SLAMF1</scope>
</reference>
<reference key="3">
    <citation type="journal article" date="2005" name="J. Virol.">
        <title>Nearby clusters of hemagglutinin residues sustain SLAM-dependent canine distemper virus entry in peripheral blood mononuclear cells.</title>
        <authorList>
            <person name="von Messling V."/>
            <person name="Oezguen N."/>
            <person name="Zheng Q."/>
            <person name="Vongpunsawad S."/>
            <person name="Braun W."/>
            <person name="Cattaneo R."/>
        </authorList>
    </citation>
    <scope>MUTAGENESIS OF PRO-483; GLY-488; ASN-489; TYR-491; PRO-493; TYR-525; ASP-526; ILE-527; SER-528; ARG-529; SER-530; HIS-532; ALA-533; ARG-543; ILE-545; TYR-547; THR-548; HIS-549; PRO-550; PHE-551; ARG-552 AND LEU-553</scope>
</reference>
<gene>
    <name type="primary">H</name>
</gene>
<feature type="chain" id="PRO_0000142597" description="Hemagglutinin glycoprotein">
    <location>
        <begin position="1"/>
        <end position="604"/>
    </location>
</feature>
<feature type="topological domain" description="Intravirion" evidence="2">
    <location>
        <begin position="1"/>
        <end position="37"/>
    </location>
</feature>
<feature type="transmembrane region" description="Helical" evidence="2">
    <location>
        <begin position="38"/>
        <end position="58"/>
    </location>
</feature>
<feature type="topological domain" description="Virion surface" evidence="2">
    <location>
        <begin position="59"/>
        <end position="604"/>
    </location>
</feature>
<feature type="glycosylation site" description="N-linked (GlcNAc...) asparagine; by host" evidence="2">
    <location>
        <position position="149"/>
    </location>
</feature>
<feature type="glycosylation site" description="N-linked (GlcNAc...) asparagine; by host" evidence="2">
    <location>
        <position position="422"/>
    </location>
</feature>
<feature type="glycosylation site" description="N-linked (GlcNAc...) asparagine; by host" evidence="2">
    <location>
        <position position="587"/>
    </location>
</feature>
<feature type="mutagenesis site" description="No effect on fusion activity." evidence="3">
    <original>P</original>
    <variation>S</variation>
    <location>
        <position position="483"/>
    </location>
</feature>
<feature type="mutagenesis site" description="No effect on fusion activity." evidence="3">
    <original>G</original>
    <variation>A</variation>
    <location>
        <position position="488"/>
    </location>
</feature>
<feature type="mutagenesis site" description="No effect on fusion activity." evidence="3">
    <original>N</original>
    <variation>A</variation>
    <location>
        <position position="489"/>
    </location>
</feature>
<feature type="mutagenesis site" description="Loss of fusion activity." evidence="3">
    <original>Y</original>
    <variation>A</variation>
    <location>
        <position position="491"/>
    </location>
</feature>
<feature type="mutagenesis site" description="Complete loss of fusion activity." evidence="3">
    <original>P</original>
    <variation>S</variation>
    <location>
        <position position="493"/>
    </location>
</feature>
<feature type="mutagenesis site" description="Complete loss of fusion activity." evidence="3">
    <original>Y</original>
    <variation>A</variation>
    <location>
        <position position="525"/>
    </location>
</feature>
<feature type="mutagenesis site" description="No effect on fusion activity." evidence="3">
    <original>D</original>
    <variation>A</variation>
    <location>
        <position position="526"/>
    </location>
</feature>
<feature type="mutagenesis site" description="Partial loss of fusion activity." evidence="3">
    <original>I</original>
    <variation>A</variation>
    <location>
        <position position="527"/>
    </location>
</feature>
<feature type="mutagenesis site" description="Partial loss of fusion activity." evidence="3">
    <original>S</original>
    <variation>A</variation>
    <location>
        <position position="528"/>
    </location>
</feature>
<feature type="mutagenesis site" description="Partial loss of fusion activity." evidence="3">
    <original>R</original>
    <variation>A</variation>
    <location>
        <position position="529"/>
    </location>
</feature>
<feature type="mutagenesis site" description="No effect on fusion activity." evidence="3">
    <original>S</original>
    <variation>A</variation>
    <location>
        <position position="530"/>
    </location>
</feature>
<feature type="mutagenesis site" description="No effect on fusion activity." evidence="3">
    <original>H</original>
    <variation>A</variation>
    <location>
        <position position="532"/>
    </location>
</feature>
<feature type="mutagenesis site" description="No effect on fusion activity." evidence="3">
    <original>A</original>
    <variation>S</variation>
    <location>
        <position position="533"/>
    </location>
</feature>
<feature type="mutagenesis site" description="No effect on fusion activity." evidence="3">
    <original>R</original>
    <variation>A</variation>
    <location>
        <position position="543"/>
    </location>
</feature>
<feature type="mutagenesis site" description="No effect on fusion activity." evidence="3">
    <original>I</original>
    <variation>S</variation>
    <location>
        <position position="545"/>
    </location>
</feature>
<feature type="mutagenesis site" description="No effect on fusion activity." evidence="3">
    <original>Y</original>
    <variation>A</variation>
    <location>
        <position position="547"/>
    </location>
</feature>
<feature type="mutagenesis site" description="No effect on fusion activity." evidence="3">
    <original>T</original>
    <variation>A</variation>
    <location>
        <position position="548"/>
    </location>
</feature>
<feature type="mutagenesis site" description="No effect on fusion activity." evidence="3">
    <original>H</original>
    <variation>A</variation>
    <location>
        <position position="549"/>
    </location>
</feature>
<feature type="mutagenesis site" description="No effect on fusion activity." evidence="3">
    <original>P</original>
    <variation>S</variation>
    <location>
        <position position="550"/>
    </location>
</feature>
<feature type="mutagenesis site" description="Complete loss of fusion activity." evidence="3">
    <original>F</original>
    <variation>S</variation>
    <location>
        <position position="551"/>
    </location>
</feature>
<feature type="mutagenesis site" description="Partial loss of fusion activity." evidence="3">
    <original>R</original>
    <variation>A</variation>
    <location>
        <position position="552"/>
    </location>
</feature>
<feature type="mutagenesis site" description="Complete loss of fusion activity." evidence="3">
    <original>L</original>
    <variation>S</variation>
    <location>
        <position position="553"/>
    </location>
</feature>
<dbReference type="EMBL" id="D00758">
    <property type="protein sequence ID" value="BAA00654.1"/>
    <property type="molecule type" value="Genomic_RNA"/>
</dbReference>
<dbReference type="PIR" id="A38480">
    <property type="entry name" value="HMNZCD"/>
</dbReference>
<dbReference type="RefSeq" id="NP_047206.1">
    <property type="nucleotide sequence ID" value="NC_001921.1"/>
</dbReference>
<dbReference type="PDB" id="7CJQ">
    <property type="method" value="X-ray"/>
    <property type="resolution" value="2.70 A"/>
    <property type="chains" value="C/F=543-551"/>
</dbReference>
<dbReference type="PDBsum" id="7CJQ"/>
<dbReference type="SMR" id="P24306"/>
<dbReference type="GlyCosmos" id="P24306">
    <property type="glycosylation" value="3 sites, No reported glycans"/>
</dbReference>
<dbReference type="KEGG" id="vg:1489792"/>
<dbReference type="GO" id="GO:0020002">
    <property type="term" value="C:host cell plasma membrane"/>
    <property type="evidence" value="ECO:0007669"/>
    <property type="project" value="UniProtKB-SubCell"/>
</dbReference>
<dbReference type="GO" id="GO:0016020">
    <property type="term" value="C:membrane"/>
    <property type="evidence" value="ECO:0007669"/>
    <property type="project" value="UniProtKB-KW"/>
</dbReference>
<dbReference type="GO" id="GO:0019031">
    <property type="term" value="C:viral envelope"/>
    <property type="evidence" value="ECO:0007669"/>
    <property type="project" value="UniProtKB-KW"/>
</dbReference>
<dbReference type="GO" id="GO:0055036">
    <property type="term" value="C:virion membrane"/>
    <property type="evidence" value="ECO:0007669"/>
    <property type="project" value="UniProtKB-SubCell"/>
</dbReference>
<dbReference type="GO" id="GO:0046789">
    <property type="term" value="F:host cell surface receptor binding"/>
    <property type="evidence" value="ECO:0007669"/>
    <property type="project" value="InterPro"/>
</dbReference>
<dbReference type="GO" id="GO:0046718">
    <property type="term" value="P:symbiont entry into host cell"/>
    <property type="evidence" value="ECO:0007669"/>
    <property type="project" value="UniProtKB-KW"/>
</dbReference>
<dbReference type="GO" id="GO:0019062">
    <property type="term" value="P:virion attachment to host cell"/>
    <property type="evidence" value="ECO:0007669"/>
    <property type="project" value="UniProtKB-KW"/>
</dbReference>
<dbReference type="Gene3D" id="2.120.10.10">
    <property type="match status" value="1"/>
</dbReference>
<dbReference type="InterPro" id="IPR000665">
    <property type="entry name" value="Hemagglutn/HN"/>
</dbReference>
<dbReference type="InterPro" id="IPR036278">
    <property type="entry name" value="Sialidase_sf"/>
</dbReference>
<dbReference type="Pfam" id="PF00423">
    <property type="entry name" value="HN"/>
    <property type="match status" value="1"/>
</dbReference>
<dbReference type="SUPFAM" id="SSF50939">
    <property type="entry name" value="Sialidases"/>
    <property type="match status" value="1"/>
</dbReference>
<sequence>MLPYQDKVGAFYKDNARANSTKLSLVTEGHGGRRPPYLLFVLLILLVGILALLAITGVRFHQVSTSNMEFSRLLKEDMEKSEAVHHQVIDVLTPLFKIIGDEIGLRLPQKLNEIKQFILQKTNFFNPNREFDFRDLHWCINPPSTVKVNFTNYCESIGIRKAIASAANPILLSALSGGRGDIFPPHRCSGATTSVGKVFPLSVSLSMSLISRTSEVINMLTAISDGVYGKTYLLVPDDIEREFDTREIRVFEIGFIKRWLNDMPLLQTTNYMVLPKNSKAKVCTIAVGELTLASLCVEESTVLLYHDSSGSQDGILVVTLGIFWATPMDHIEEVIPVAHPSMKKIHITNHRGFIKDSIATWMVPALASEKQEEQKGCLESACQRKTYPMCNQASWEPFGGRQLPSYGRLTLPLDASVDLQLNISFTYGPVILNGDGMDYYESPLLNSGWLTIPPKDGTISGLINKAGRGDQFTVLPHVLTFAPRESSGNCYLPIQTSQIRDRDVLIESNIVVLPTQSIRYVIATYDISRSDHAIVYYVYDPIRTISYTHPFRLTTKGRPDFLRIECFVWDDNLWCHQFYRFEADIANSTTSVENLVRIRFSCNR</sequence>
<proteinExistence type="evidence at protein level"/>
<name>HEMA_CDVO</name>